<comment type="function">
    <text>Confers broad-spectrum resistance to pathogens.</text>
</comment>
<comment type="subcellular location">
    <subcellularLocation>
        <location evidence="1">Secreted</location>
    </subcellularLocation>
</comment>
<comment type="tissue specificity">
    <text evidence="3">Expressed in the whole plant except roots.</text>
</comment>
<comment type="similarity">
    <text evidence="4">Belongs to the DEFL family.</text>
</comment>
<evidence type="ECO:0000250" key="1"/>
<evidence type="ECO:0000255" key="2"/>
<evidence type="ECO:0000269" key="3">
    <source>
    </source>
</evidence>
<evidence type="ECO:0000305" key="4"/>
<protein>
    <recommendedName>
        <fullName>Defensin-like protein 1</fullName>
    </recommendedName>
    <alternativeName>
        <fullName>Low-molecular-weight cysteine-rich protein 68</fullName>
        <shortName>Protein LCR68</shortName>
    </alternativeName>
    <alternativeName>
        <fullName>Plant defensin 2.3</fullName>
    </alternativeName>
</protein>
<proteinExistence type="evidence at transcript level"/>
<name>DEF01_ARATH</name>
<dbReference type="EMBL" id="AC005936">
    <property type="protein sequence ID" value="AAC97221.1"/>
    <property type="molecule type" value="Genomic_DNA"/>
</dbReference>
<dbReference type="EMBL" id="CP002685">
    <property type="protein sequence ID" value="AEC05549.1"/>
    <property type="molecule type" value="Genomic_DNA"/>
</dbReference>
<dbReference type="EMBL" id="AY050979">
    <property type="protein sequence ID" value="AAK93656.1"/>
    <property type="molecule type" value="mRNA"/>
</dbReference>
<dbReference type="EMBL" id="AY079405">
    <property type="protein sequence ID" value="AAL85136.1"/>
    <property type="molecule type" value="mRNA"/>
</dbReference>
<dbReference type="EMBL" id="AY803260">
    <property type="protein sequence ID" value="AAX39301.1"/>
    <property type="molecule type" value="mRNA"/>
</dbReference>
<dbReference type="PIR" id="C84433">
    <property type="entry name" value="C84433"/>
</dbReference>
<dbReference type="RefSeq" id="NP_178321.1">
    <property type="nucleotide sequence ID" value="NM_126273.4"/>
</dbReference>
<dbReference type="SMR" id="Q9ZUL7"/>
<dbReference type="BioGRID" id="147">
    <property type="interactions" value="1"/>
</dbReference>
<dbReference type="FunCoup" id="Q9ZUL7">
    <property type="interactions" value="699"/>
</dbReference>
<dbReference type="IntAct" id="Q9ZUL7">
    <property type="interactions" value="1"/>
</dbReference>
<dbReference type="STRING" id="3702.Q9ZUL7"/>
<dbReference type="PaxDb" id="3702-AT2G02130.1"/>
<dbReference type="ProteomicsDB" id="224589"/>
<dbReference type="EnsemblPlants" id="AT2G02130.1">
    <property type="protein sequence ID" value="AT2G02130.1"/>
    <property type="gene ID" value="AT2G02130"/>
</dbReference>
<dbReference type="GeneID" id="814744"/>
<dbReference type="Gramene" id="AT2G02130.1">
    <property type="protein sequence ID" value="AT2G02130.1"/>
    <property type="gene ID" value="AT2G02130"/>
</dbReference>
<dbReference type="KEGG" id="ath:AT2G02130"/>
<dbReference type="Araport" id="AT2G02130"/>
<dbReference type="TAIR" id="AT2G02130">
    <property type="gene designation" value="LCR68"/>
</dbReference>
<dbReference type="eggNOG" id="ENOG502S7HM">
    <property type="taxonomic scope" value="Eukaryota"/>
</dbReference>
<dbReference type="HOGENOM" id="CLU_161668_1_2_1"/>
<dbReference type="InParanoid" id="Q9ZUL7"/>
<dbReference type="OMA" id="CESACHT"/>
<dbReference type="OrthoDB" id="683455at2759"/>
<dbReference type="PhylomeDB" id="Q9ZUL7"/>
<dbReference type="PRO" id="PR:Q9ZUL7"/>
<dbReference type="Proteomes" id="UP000006548">
    <property type="component" value="Chromosome 2"/>
</dbReference>
<dbReference type="ExpressionAtlas" id="Q9ZUL7">
    <property type="expression patterns" value="baseline and differential"/>
</dbReference>
<dbReference type="GO" id="GO:0005576">
    <property type="term" value="C:extracellular region"/>
    <property type="evidence" value="ECO:0007669"/>
    <property type="project" value="UniProtKB-SubCell"/>
</dbReference>
<dbReference type="GO" id="GO:0005739">
    <property type="term" value="C:mitochondrion"/>
    <property type="evidence" value="ECO:0007005"/>
    <property type="project" value="TAIR"/>
</dbReference>
<dbReference type="GO" id="GO:0009506">
    <property type="term" value="C:plasmodesma"/>
    <property type="evidence" value="ECO:0007005"/>
    <property type="project" value="TAIR"/>
</dbReference>
<dbReference type="GO" id="GO:0006952">
    <property type="term" value="P:defense response"/>
    <property type="evidence" value="ECO:0000250"/>
    <property type="project" value="TAIR"/>
</dbReference>
<dbReference type="GO" id="GO:0050832">
    <property type="term" value="P:defense response to fungus"/>
    <property type="evidence" value="ECO:0007669"/>
    <property type="project" value="UniProtKB-KW"/>
</dbReference>
<dbReference type="GO" id="GO:0031640">
    <property type="term" value="P:killing of cells of another organism"/>
    <property type="evidence" value="ECO:0007669"/>
    <property type="project" value="UniProtKB-KW"/>
</dbReference>
<dbReference type="CDD" id="cd00107">
    <property type="entry name" value="Knot1"/>
    <property type="match status" value="1"/>
</dbReference>
<dbReference type="FunFam" id="3.30.30.10:FF:000004">
    <property type="entry name" value="Defensin-like protein CAL1"/>
    <property type="match status" value="1"/>
</dbReference>
<dbReference type="Gene3D" id="3.30.30.10">
    <property type="entry name" value="Knottin, scorpion toxin-like"/>
    <property type="match status" value="1"/>
</dbReference>
<dbReference type="InterPro" id="IPR008176">
    <property type="entry name" value="Defensin_plant"/>
</dbReference>
<dbReference type="InterPro" id="IPR003614">
    <property type="entry name" value="Scorpion_toxin-like"/>
</dbReference>
<dbReference type="InterPro" id="IPR036574">
    <property type="entry name" value="Scorpion_toxin-like_sf"/>
</dbReference>
<dbReference type="PANTHER" id="PTHR33147">
    <property type="entry name" value="DEFENSIN-LIKE PROTEIN 1"/>
    <property type="match status" value="1"/>
</dbReference>
<dbReference type="PANTHER" id="PTHR33147:SF72">
    <property type="entry name" value="DEFENSIN-LIKE PROTEIN 1-RELATED"/>
    <property type="match status" value="1"/>
</dbReference>
<dbReference type="Pfam" id="PF00304">
    <property type="entry name" value="Gamma-thionin"/>
    <property type="match status" value="1"/>
</dbReference>
<dbReference type="PRINTS" id="PR00288">
    <property type="entry name" value="PUROTHIONIN"/>
</dbReference>
<dbReference type="SMART" id="SM00505">
    <property type="entry name" value="Knot1"/>
    <property type="match status" value="1"/>
</dbReference>
<dbReference type="SUPFAM" id="SSF57095">
    <property type="entry name" value="Scorpion toxin-like"/>
    <property type="match status" value="1"/>
</dbReference>
<dbReference type="PROSITE" id="PS00940">
    <property type="entry name" value="GAMMA_THIONIN"/>
    <property type="match status" value="1"/>
</dbReference>
<accession>Q9ZUL7</accession>
<accession>Q4VP02</accession>
<sequence>MKLSVRFISAALLLFMVFIATGMGPVTVEARTCESKSHRFKGPCVSTHNCANVCHNEGFGGGKCRGFRRRCYCTRHC</sequence>
<gene>
    <name type="primary">PDF2.3</name>
    <name type="synonym">LCR68</name>
    <name type="ordered locus">At2g02130</name>
    <name type="ORF">F5O4.10</name>
</gene>
<reference key="1">
    <citation type="journal article" date="1999" name="Nature">
        <title>Sequence and analysis of chromosome 2 of the plant Arabidopsis thaliana.</title>
        <authorList>
            <person name="Lin X."/>
            <person name="Kaul S."/>
            <person name="Rounsley S.D."/>
            <person name="Shea T.P."/>
            <person name="Benito M.-I."/>
            <person name="Town C.D."/>
            <person name="Fujii C.Y."/>
            <person name="Mason T.M."/>
            <person name="Bowman C.L."/>
            <person name="Barnstead M.E."/>
            <person name="Feldblyum T.V."/>
            <person name="Buell C.R."/>
            <person name="Ketchum K.A."/>
            <person name="Lee J.J."/>
            <person name="Ronning C.M."/>
            <person name="Koo H.L."/>
            <person name="Moffat K.S."/>
            <person name="Cronin L.A."/>
            <person name="Shen M."/>
            <person name="Pai G."/>
            <person name="Van Aken S."/>
            <person name="Umayam L."/>
            <person name="Tallon L.J."/>
            <person name="Gill J.E."/>
            <person name="Adams M.D."/>
            <person name="Carrera A.J."/>
            <person name="Creasy T.H."/>
            <person name="Goodman H.M."/>
            <person name="Somerville C.R."/>
            <person name="Copenhaver G.P."/>
            <person name="Preuss D."/>
            <person name="Nierman W.C."/>
            <person name="White O."/>
            <person name="Eisen J.A."/>
            <person name="Salzberg S.L."/>
            <person name="Fraser C.M."/>
            <person name="Venter J.C."/>
        </authorList>
    </citation>
    <scope>NUCLEOTIDE SEQUENCE [LARGE SCALE GENOMIC DNA]</scope>
    <source>
        <strain>cv. Columbia</strain>
    </source>
</reference>
<reference key="2">
    <citation type="journal article" date="2017" name="Plant J.">
        <title>Araport11: a complete reannotation of the Arabidopsis thaliana reference genome.</title>
        <authorList>
            <person name="Cheng C.Y."/>
            <person name="Krishnakumar V."/>
            <person name="Chan A.P."/>
            <person name="Thibaud-Nissen F."/>
            <person name="Schobel S."/>
            <person name="Town C.D."/>
        </authorList>
    </citation>
    <scope>GENOME REANNOTATION</scope>
    <source>
        <strain>cv. Columbia</strain>
    </source>
</reference>
<reference key="3">
    <citation type="journal article" date="2003" name="Science">
        <title>Empirical analysis of transcriptional activity in the Arabidopsis genome.</title>
        <authorList>
            <person name="Yamada K."/>
            <person name="Lim J."/>
            <person name="Dale J.M."/>
            <person name="Chen H."/>
            <person name="Shinn P."/>
            <person name="Palm C.J."/>
            <person name="Southwick A.M."/>
            <person name="Wu H.C."/>
            <person name="Kim C.J."/>
            <person name="Nguyen M."/>
            <person name="Pham P.K."/>
            <person name="Cheuk R.F."/>
            <person name="Karlin-Newmann G."/>
            <person name="Liu S.X."/>
            <person name="Lam B."/>
            <person name="Sakano H."/>
            <person name="Wu T."/>
            <person name="Yu G."/>
            <person name="Miranda M."/>
            <person name="Quach H.L."/>
            <person name="Tripp M."/>
            <person name="Chang C.H."/>
            <person name="Lee J.M."/>
            <person name="Toriumi M.J."/>
            <person name="Chan M.M."/>
            <person name="Tang C.C."/>
            <person name="Onodera C.S."/>
            <person name="Deng J.M."/>
            <person name="Akiyama K."/>
            <person name="Ansari Y."/>
            <person name="Arakawa T."/>
            <person name="Banh J."/>
            <person name="Banno F."/>
            <person name="Bowser L."/>
            <person name="Brooks S.Y."/>
            <person name="Carninci P."/>
            <person name="Chao Q."/>
            <person name="Choy N."/>
            <person name="Enju A."/>
            <person name="Goldsmith A.D."/>
            <person name="Gurjal M."/>
            <person name="Hansen N.F."/>
            <person name="Hayashizaki Y."/>
            <person name="Johnson-Hopson C."/>
            <person name="Hsuan V.W."/>
            <person name="Iida K."/>
            <person name="Karnes M."/>
            <person name="Khan S."/>
            <person name="Koesema E."/>
            <person name="Ishida J."/>
            <person name="Jiang P.X."/>
            <person name="Jones T."/>
            <person name="Kawai J."/>
            <person name="Kamiya A."/>
            <person name="Meyers C."/>
            <person name="Nakajima M."/>
            <person name="Narusaka M."/>
            <person name="Seki M."/>
            <person name="Sakurai T."/>
            <person name="Satou M."/>
            <person name="Tamse R."/>
            <person name="Vaysberg M."/>
            <person name="Wallender E.K."/>
            <person name="Wong C."/>
            <person name="Yamamura Y."/>
            <person name="Yuan S."/>
            <person name="Shinozaki K."/>
            <person name="Davis R.W."/>
            <person name="Theologis A."/>
            <person name="Ecker J.R."/>
        </authorList>
    </citation>
    <scope>NUCLEOTIDE SEQUENCE [LARGE SCALE MRNA]</scope>
    <source>
        <strain>cv. Columbia</strain>
    </source>
</reference>
<reference key="4">
    <citation type="journal article" date="2005" name="Plant Physiol.">
        <title>Genome organization of more than 300 defensin-like genes in Arabidopsis.</title>
        <authorList>
            <person name="Silverstein K.A.T."/>
            <person name="Graham M.A."/>
            <person name="Paape T.D."/>
            <person name="VandenBosch K.A."/>
        </authorList>
    </citation>
    <scope>NUCLEOTIDE SEQUENCE [MRNA] OF 1-30</scope>
    <scope>GENE FAMILY</scope>
</reference>
<reference key="5">
    <citation type="journal article" date="1997" name="FEBS Lett.">
        <title>ESTs reveal a multigene family for plant defensins in Arabidopsis thaliana.</title>
        <authorList>
            <person name="Epple P."/>
            <person name="Apel K."/>
            <person name="Bohlmann H."/>
        </authorList>
    </citation>
    <scope>TISSUE SPECIFICITY</scope>
</reference>
<reference key="6">
    <citation type="journal article" date="2001" name="Plant Mol. Biol.">
        <title>Two large Arabidopsis thaliana gene families are homologous to the Brassica gene superfamily that encodes pollen coat proteins and the male component of the self-incompatibility response.</title>
        <authorList>
            <person name="Vanoosthuyse V."/>
            <person name="Miege C."/>
            <person name="Dumas C."/>
            <person name="Cock J.M."/>
        </authorList>
    </citation>
    <scope>IDENTIFICATION</scope>
</reference>
<reference key="7">
    <citation type="journal article" date="2002" name="Planta">
        <title>Plant defensins.</title>
        <authorList>
            <person name="Thomma B.P.H.J."/>
            <person name="Cammue B.P."/>
            <person name="Thevissen K."/>
        </authorList>
    </citation>
    <scope>GENE FAMILY</scope>
    <scope>NOMENCLATURE</scope>
</reference>
<organism>
    <name type="scientific">Arabidopsis thaliana</name>
    <name type="common">Mouse-ear cress</name>
    <dbReference type="NCBI Taxonomy" id="3702"/>
    <lineage>
        <taxon>Eukaryota</taxon>
        <taxon>Viridiplantae</taxon>
        <taxon>Streptophyta</taxon>
        <taxon>Embryophyta</taxon>
        <taxon>Tracheophyta</taxon>
        <taxon>Spermatophyta</taxon>
        <taxon>Magnoliopsida</taxon>
        <taxon>eudicotyledons</taxon>
        <taxon>Gunneridae</taxon>
        <taxon>Pentapetalae</taxon>
        <taxon>rosids</taxon>
        <taxon>malvids</taxon>
        <taxon>Brassicales</taxon>
        <taxon>Brassicaceae</taxon>
        <taxon>Camelineae</taxon>
        <taxon>Arabidopsis</taxon>
    </lineage>
</organism>
<feature type="signal peptide" evidence="2">
    <location>
        <begin position="1"/>
        <end position="30"/>
    </location>
</feature>
<feature type="chain" id="PRO_0000007023" description="Defensin-like protein 1">
    <location>
        <begin position="31"/>
        <end position="77"/>
    </location>
</feature>
<feature type="disulfide bond" evidence="1">
    <location>
        <begin position="33"/>
        <end position="77"/>
    </location>
</feature>
<feature type="disulfide bond" evidence="1">
    <location>
        <begin position="44"/>
        <end position="64"/>
    </location>
</feature>
<feature type="disulfide bond" evidence="1">
    <location>
        <begin position="50"/>
        <end position="71"/>
    </location>
</feature>
<feature type="disulfide bond" evidence="1">
    <location>
        <begin position="54"/>
        <end position="73"/>
    </location>
</feature>
<keyword id="KW-0929">Antimicrobial</keyword>
<keyword id="KW-1015">Disulfide bond</keyword>
<keyword id="KW-0295">Fungicide</keyword>
<keyword id="KW-0611">Plant defense</keyword>
<keyword id="KW-1185">Reference proteome</keyword>
<keyword id="KW-0964">Secreted</keyword>
<keyword id="KW-0732">Signal</keyword>